<keyword id="KW-0028">Amino-acid biosynthesis</keyword>
<keyword id="KW-0067">ATP-binding</keyword>
<keyword id="KW-0963">Cytoplasm</keyword>
<keyword id="KW-0328">Glycosyltransferase</keyword>
<keyword id="KW-0368">Histidine biosynthesis</keyword>
<keyword id="KW-0460">Magnesium</keyword>
<keyword id="KW-0479">Metal-binding</keyword>
<keyword id="KW-0547">Nucleotide-binding</keyword>
<keyword id="KW-1185">Reference proteome</keyword>
<keyword id="KW-0808">Transferase</keyword>
<protein>
    <recommendedName>
        <fullName evidence="1">ATP phosphoribosyltransferase</fullName>
        <shortName evidence="1">ATP-PRT</shortName>
        <shortName evidence="1">ATP-PRTase</shortName>
        <ecNumber evidence="1">2.4.2.17</ecNumber>
    </recommendedName>
</protein>
<accession>Q8FTD5</accession>
<reference key="1">
    <citation type="journal article" date="2003" name="Genome Res.">
        <title>Comparative complete genome sequence analysis of the amino acid replacements responsible for the thermostability of Corynebacterium efficiens.</title>
        <authorList>
            <person name="Nishio Y."/>
            <person name="Nakamura Y."/>
            <person name="Kawarabayasi Y."/>
            <person name="Usuda Y."/>
            <person name="Kimura E."/>
            <person name="Sugimoto S."/>
            <person name="Matsui K."/>
            <person name="Yamagishi A."/>
            <person name="Kikuchi H."/>
            <person name="Ikeo K."/>
            <person name="Gojobori T."/>
        </authorList>
    </citation>
    <scope>NUCLEOTIDE SEQUENCE [LARGE SCALE GENOMIC DNA]</scope>
    <source>
        <strain>DSM 44549 / YS-314 / AJ 12310 / JCM 11189 / NBRC 100395</strain>
    </source>
</reference>
<organism>
    <name type="scientific">Corynebacterium efficiens (strain DSM 44549 / YS-314 / AJ 12310 / JCM 11189 / NBRC 100395)</name>
    <dbReference type="NCBI Taxonomy" id="196164"/>
    <lineage>
        <taxon>Bacteria</taxon>
        <taxon>Bacillati</taxon>
        <taxon>Actinomycetota</taxon>
        <taxon>Actinomycetes</taxon>
        <taxon>Mycobacteriales</taxon>
        <taxon>Corynebacteriaceae</taxon>
        <taxon>Corynebacterium</taxon>
    </lineage>
</organism>
<evidence type="ECO:0000255" key="1">
    <source>
        <dbReference type="HAMAP-Rule" id="MF_00079"/>
    </source>
</evidence>
<gene>
    <name evidence="1" type="primary">hisG</name>
    <name type="ordered locus">CE1634</name>
</gene>
<comment type="function">
    <text evidence="1">Catalyzes the condensation of ATP and 5-phosphoribose 1-diphosphate to form N'-(5'-phosphoribosyl)-ATP (PR-ATP). Has a crucial role in the pathway because the rate of histidine biosynthesis seems to be controlled primarily by regulation of HisG enzymatic activity.</text>
</comment>
<comment type="catalytic activity">
    <reaction evidence="1">
        <text>1-(5-phospho-beta-D-ribosyl)-ATP + diphosphate = 5-phospho-alpha-D-ribose 1-diphosphate + ATP</text>
        <dbReference type="Rhea" id="RHEA:18473"/>
        <dbReference type="ChEBI" id="CHEBI:30616"/>
        <dbReference type="ChEBI" id="CHEBI:33019"/>
        <dbReference type="ChEBI" id="CHEBI:58017"/>
        <dbReference type="ChEBI" id="CHEBI:73183"/>
        <dbReference type="EC" id="2.4.2.17"/>
    </reaction>
</comment>
<comment type="cofactor">
    <cofactor evidence="1">
        <name>Mg(2+)</name>
        <dbReference type="ChEBI" id="CHEBI:18420"/>
    </cofactor>
</comment>
<comment type="activity regulation">
    <text evidence="1">Feedback inhibited by histidine.</text>
</comment>
<comment type="pathway">
    <text evidence="1">Amino-acid biosynthesis; L-histidine biosynthesis; L-histidine from 5-phospho-alpha-D-ribose 1-diphosphate: step 1/9.</text>
</comment>
<comment type="subcellular location">
    <subcellularLocation>
        <location evidence="1">Cytoplasm</location>
    </subcellularLocation>
</comment>
<comment type="similarity">
    <text evidence="1">Belongs to the ATP phosphoribosyltransferase family. Long subfamily.</text>
</comment>
<dbReference type="EC" id="2.4.2.17" evidence="1"/>
<dbReference type="EMBL" id="BA000035">
    <property type="protein sequence ID" value="BAC18444.1"/>
    <property type="molecule type" value="Genomic_DNA"/>
</dbReference>
<dbReference type="RefSeq" id="WP_006767634.1">
    <property type="nucleotide sequence ID" value="NC_004369.1"/>
</dbReference>
<dbReference type="SMR" id="Q8FTD5"/>
<dbReference type="STRING" id="196164.gene:10742053"/>
<dbReference type="KEGG" id="cef:CE1634"/>
<dbReference type="eggNOG" id="COG0040">
    <property type="taxonomic scope" value="Bacteria"/>
</dbReference>
<dbReference type="HOGENOM" id="CLU_038115_1_1_11"/>
<dbReference type="OrthoDB" id="9801867at2"/>
<dbReference type="UniPathway" id="UPA00031">
    <property type="reaction ID" value="UER00006"/>
</dbReference>
<dbReference type="Proteomes" id="UP000001409">
    <property type="component" value="Chromosome"/>
</dbReference>
<dbReference type="GO" id="GO:0005737">
    <property type="term" value="C:cytoplasm"/>
    <property type="evidence" value="ECO:0007669"/>
    <property type="project" value="UniProtKB-SubCell"/>
</dbReference>
<dbReference type="GO" id="GO:0005524">
    <property type="term" value="F:ATP binding"/>
    <property type="evidence" value="ECO:0007669"/>
    <property type="project" value="UniProtKB-KW"/>
</dbReference>
<dbReference type="GO" id="GO:0003879">
    <property type="term" value="F:ATP phosphoribosyltransferase activity"/>
    <property type="evidence" value="ECO:0007669"/>
    <property type="project" value="UniProtKB-UniRule"/>
</dbReference>
<dbReference type="GO" id="GO:0000287">
    <property type="term" value="F:magnesium ion binding"/>
    <property type="evidence" value="ECO:0007669"/>
    <property type="project" value="UniProtKB-UniRule"/>
</dbReference>
<dbReference type="GO" id="GO:0000105">
    <property type="term" value="P:L-histidine biosynthetic process"/>
    <property type="evidence" value="ECO:0007669"/>
    <property type="project" value="UniProtKB-UniRule"/>
</dbReference>
<dbReference type="CDD" id="cd13591">
    <property type="entry name" value="PBP2_HisGL1"/>
    <property type="match status" value="1"/>
</dbReference>
<dbReference type="Gene3D" id="3.30.70.120">
    <property type="match status" value="1"/>
</dbReference>
<dbReference type="Gene3D" id="3.40.190.10">
    <property type="entry name" value="Periplasmic binding protein-like II"/>
    <property type="match status" value="2"/>
</dbReference>
<dbReference type="HAMAP" id="MF_00079">
    <property type="entry name" value="HisG_Long"/>
    <property type="match status" value="1"/>
</dbReference>
<dbReference type="InterPro" id="IPR020621">
    <property type="entry name" value="ATP-PRT_HisG_long"/>
</dbReference>
<dbReference type="InterPro" id="IPR013820">
    <property type="entry name" value="ATP_PRibTrfase_cat"/>
</dbReference>
<dbReference type="InterPro" id="IPR018198">
    <property type="entry name" value="ATP_PRibTrfase_CS"/>
</dbReference>
<dbReference type="InterPro" id="IPR001348">
    <property type="entry name" value="ATP_PRibTrfase_HisG"/>
</dbReference>
<dbReference type="InterPro" id="IPR013115">
    <property type="entry name" value="HisG_C"/>
</dbReference>
<dbReference type="InterPro" id="IPR011322">
    <property type="entry name" value="N-reg_PII-like_a/b"/>
</dbReference>
<dbReference type="InterPro" id="IPR015867">
    <property type="entry name" value="N-reg_PII/ATP_PRibTrfase_C"/>
</dbReference>
<dbReference type="NCBIfam" id="TIGR00070">
    <property type="entry name" value="hisG"/>
    <property type="match status" value="1"/>
</dbReference>
<dbReference type="NCBIfam" id="TIGR03455">
    <property type="entry name" value="HisG_C-term"/>
    <property type="match status" value="1"/>
</dbReference>
<dbReference type="PANTHER" id="PTHR21403:SF8">
    <property type="entry name" value="ATP PHOSPHORIBOSYLTRANSFERASE"/>
    <property type="match status" value="1"/>
</dbReference>
<dbReference type="PANTHER" id="PTHR21403">
    <property type="entry name" value="ATP PHOSPHORIBOSYLTRANSFERASE ATP-PRTASE"/>
    <property type="match status" value="1"/>
</dbReference>
<dbReference type="Pfam" id="PF01634">
    <property type="entry name" value="HisG"/>
    <property type="match status" value="1"/>
</dbReference>
<dbReference type="Pfam" id="PF08029">
    <property type="entry name" value="HisG_C"/>
    <property type="match status" value="1"/>
</dbReference>
<dbReference type="SUPFAM" id="SSF54913">
    <property type="entry name" value="GlnB-like"/>
    <property type="match status" value="1"/>
</dbReference>
<dbReference type="SUPFAM" id="SSF53850">
    <property type="entry name" value="Periplasmic binding protein-like II"/>
    <property type="match status" value="1"/>
</dbReference>
<dbReference type="PROSITE" id="PS01316">
    <property type="entry name" value="ATP_P_PHORIBOSYLTR"/>
    <property type="match status" value="1"/>
</dbReference>
<name>HIS1_COREF</name>
<feature type="chain" id="PRO_0000151845" description="ATP phosphoribosyltransferase">
    <location>
        <begin position="1"/>
        <end position="281"/>
    </location>
</feature>
<sequence length="281" mass="30106">MLKIAVPNKGSLSERAMEILNEAGYAGRGDSKSLNVLDSANDVEFFYLRPKDIAIYVAGGQLDLGITGRDLAADSRADVHEVLSLGFGSSTFRYAAPAGQGWSIEKLEGKRIATSYPNLVRDDLAARGITAEVIRLDGAVEISIKLGVADAIADVVSTGRTLRQQGLEPFGESLCTSEAVIVGRRDEEITPAQRVLLSRIQGILHAQNYLMLDYNVDRDRLDEASAVTPGISGPTVSPLARENWVAVRAMVPLKSANATMDKLASIGAEAILASEIRIARI</sequence>
<proteinExistence type="inferred from homology"/>